<keyword id="KW-0134">Cell wall</keyword>
<keyword id="KW-0961">Cell wall biogenesis/degradation</keyword>
<keyword id="KW-0325">Glycoprotein</keyword>
<keyword id="KW-0379">Hydroxylation</keyword>
<keyword id="KW-1185">Reference proteome</keyword>
<keyword id="KW-0677">Repeat</keyword>
<keyword id="KW-0964">Secreted</keyword>
<keyword id="KW-0732">Signal</keyword>
<reference key="1">
    <citation type="journal article" date="1989" name="Genes Dev.">
        <title>Specific expression of a novel cell wall hydroxyproline-rich glycoprotein gene in lateral root initiation.</title>
        <authorList>
            <person name="Keller B."/>
            <person name="Lamb C.J."/>
        </authorList>
    </citation>
    <scope>NUCLEOTIDE SEQUENCE [GENOMIC DNA]</scope>
    <scope>TISSUE SPECIFICITY</scope>
    <source>
        <strain>cv. Xanthi</strain>
        <tissue>Leaf</tissue>
    </source>
</reference>
<protein>
    <recommendedName>
        <fullName>Extensin</fullName>
    </recommendedName>
    <alternativeName>
        <fullName>Cell wall hydroxyproline-rich glycoprotein</fullName>
    </alternativeName>
</protein>
<name>EXTN_TOBAC</name>
<comment type="function">
    <text>Has a specialized structural function, possibly in the mechanical penetration of the cortex and epidermis of the main root.</text>
</comment>
<comment type="subcellular location">
    <subcellularLocation>
        <location>Secreted</location>
        <location>Primary cell wall</location>
    </subcellularLocation>
</comment>
<comment type="tissue specificity">
    <text evidence="3">Expressed in the tip of the emerging lateral roots.</text>
</comment>
<comment type="PTM">
    <text>Hydroxylated on proline residues in the S-P-P-P-P repeat.</text>
</comment>
<comment type="PTM">
    <text>O-glycosylated on hydroxyprolines.</text>
</comment>
<organism>
    <name type="scientific">Nicotiana tabacum</name>
    <name type="common">Common tobacco</name>
    <dbReference type="NCBI Taxonomy" id="4097"/>
    <lineage>
        <taxon>Eukaryota</taxon>
        <taxon>Viridiplantae</taxon>
        <taxon>Streptophyta</taxon>
        <taxon>Embryophyta</taxon>
        <taxon>Tracheophyta</taxon>
        <taxon>Spermatophyta</taxon>
        <taxon>Magnoliopsida</taxon>
        <taxon>eudicotyledons</taxon>
        <taxon>Gunneridae</taxon>
        <taxon>Pentapetalae</taxon>
        <taxon>asterids</taxon>
        <taxon>lamiids</taxon>
        <taxon>Solanales</taxon>
        <taxon>Solanaceae</taxon>
        <taxon>Nicotianoideae</taxon>
        <taxon>Nicotianeae</taxon>
        <taxon>Nicotiana</taxon>
    </lineage>
</organism>
<feature type="signal peptide" evidence="1">
    <location>
        <begin position="1"/>
        <end position="20"/>
    </location>
</feature>
<feature type="chain" id="PRO_0000008731" description="Extensin">
    <location>
        <begin position="21"/>
        <end position="620"/>
    </location>
</feature>
<feature type="repeat" description="H-A-P-P">
    <location>
        <begin position="70"/>
        <end position="73"/>
    </location>
</feature>
<feature type="repeat" description="H-A-P-P">
    <location>
        <begin position="148"/>
        <end position="151"/>
    </location>
</feature>
<feature type="repeat" description="1">
    <location>
        <begin position="229"/>
        <end position="235"/>
    </location>
</feature>
<feature type="repeat" description="2">
    <location>
        <begin position="236"/>
        <end position="242"/>
    </location>
</feature>
<feature type="region of interest" description="Disordered" evidence="2">
    <location>
        <begin position="34"/>
        <end position="620"/>
    </location>
</feature>
<feature type="region of interest" description="Contains the Ser-Pro(4) repeats">
    <location>
        <begin position="205"/>
        <end position="620"/>
    </location>
</feature>
<feature type="region of interest" description="2 X 7 AA tandem repeats of T-H-R-H-A-P-P">
    <location>
        <begin position="229"/>
        <end position="242"/>
    </location>
</feature>
<feature type="region of interest" description="3 X approximate tandem repeats">
    <location>
        <begin position="499"/>
        <end position="600"/>
    </location>
</feature>
<feature type="compositionally biased region" description="Pro residues" evidence="2">
    <location>
        <begin position="34"/>
        <end position="45"/>
    </location>
</feature>
<feature type="compositionally biased region" description="Pro residues" evidence="2">
    <location>
        <begin position="106"/>
        <end position="129"/>
    </location>
</feature>
<feature type="compositionally biased region" description="Low complexity" evidence="2">
    <location>
        <begin position="145"/>
        <end position="163"/>
    </location>
</feature>
<feature type="compositionally biased region" description="Basic residues" evidence="2">
    <location>
        <begin position="164"/>
        <end position="177"/>
    </location>
</feature>
<feature type="compositionally biased region" description="Pro residues" evidence="2">
    <location>
        <begin position="178"/>
        <end position="219"/>
    </location>
</feature>
<feature type="compositionally biased region" description="Basic residues" evidence="2">
    <location>
        <begin position="229"/>
        <end position="241"/>
    </location>
</feature>
<feature type="compositionally biased region" description="Pro residues" evidence="2">
    <location>
        <begin position="251"/>
        <end position="552"/>
    </location>
</feature>
<feature type="compositionally biased region" description="Pro residues" evidence="2">
    <location>
        <begin position="562"/>
        <end position="613"/>
    </location>
</feature>
<sequence>MKLSTLFALVLLLQSTAILSLVAAEATTQYGGYLPPPVTSQPPPSSIGLSPPSAPTTTPPSRGHVPSPRHAPPRHAYPPPSHGHLPPSVGGPPPHRGHLPPSRGFNPPPSPVISPSHPPPSYGAPPPSHGPGHLPSHGQRPPSPSHGHAPPSGGHTPPRGQHPPSHRRPSPPSRHGHPPPPTYAQPPPTPIYSPSPQVQPPPTYSPPPPTHVQPTPSPPSRGHQPQPPTHRHAPPTHRHAPPTHQPSPLRHLPPSPRRQPQPPTYSPPPPAYAQSPQPSPTYSPPPPTYSPPPPSPIYSPPPPAYSPSPPPTPTPTFSPPPPAYSPPPTYSPPPPTYLPLPSSPIYSPPPPVYSPPPPPSYSPPPPTYLPPPPPSSPPPPSFSPPPPTYEQSPPPPPAYSPPLPAPPTYSPPPPTYSPPPPTYAQPPPLPPTYSPPPPAYSPPPPPTYSPPPPTYSPPPPAYAQPPPPPPTYSPPPPAYSPPPPSPIYSPPPPQVQPLPPTFSPPPPRRIHLPPPPHRQPRPPTPTYGQPPSPPTFSPPPPRQIHSPPPPHWQPRTPTPTYGQPPSPPTFSAPPPRQIHSPPPPHRQPRPPTPTYGQPPSPPTTYSPPSPPPYGLLLSTP</sequence>
<evidence type="ECO:0000255" key="1"/>
<evidence type="ECO:0000256" key="2">
    <source>
        <dbReference type="SAM" id="MobiDB-lite"/>
    </source>
</evidence>
<evidence type="ECO:0000269" key="3">
    <source>
    </source>
</evidence>
<accession>P13983</accession>
<proteinExistence type="evidence at transcript level"/>
<dbReference type="EMBL" id="X13885">
    <property type="protein sequence ID" value="CAA32090.1"/>
    <property type="molecule type" value="Genomic_DNA"/>
</dbReference>
<dbReference type="PIR" id="S06733">
    <property type="entry name" value="S06733"/>
</dbReference>
<dbReference type="PaxDb" id="4097-P13983"/>
<dbReference type="Proteomes" id="UP000084051">
    <property type="component" value="Unplaced"/>
</dbReference>
<dbReference type="GO" id="GO:0005576">
    <property type="term" value="C:extracellular region"/>
    <property type="evidence" value="ECO:0007669"/>
    <property type="project" value="UniProtKB-KW"/>
</dbReference>
<dbReference type="GO" id="GO:0009530">
    <property type="term" value="C:primary cell wall"/>
    <property type="evidence" value="ECO:0007669"/>
    <property type="project" value="UniProtKB-SubCell"/>
</dbReference>
<dbReference type="GO" id="GO:0071555">
    <property type="term" value="P:cell wall organization"/>
    <property type="evidence" value="ECO:0007669"/>
    <property type="project" value="UniProtKB-KW"/>
</dbReference>
<gene>
    <name type="primary">HRGPNT3</name>
</gene>